<feature type="chain" id="PRO_0000083557" description="Isocitrate dehydrogenase [NADP]">
    <location>
        <begin position="1"/>
        <end position="483"/>
    </location>
</feature>
<feature type="binding site" evidence="1">
    <location>
        <position position="74"/>
    </location>
    <ligand>
        <name>NADP(+)</name>
        <dbReference type="ChEBI" id="CHEBI:58349"/>
    </ligand>
</feature>
<feature type="binding site" evidence="1">
    <location>
        <position position="83"/>
    </location>
    <ligand>
        <name>D-threo-isocitrate</name>
        <dbReference type="ChEBI" id="CHEBI:15562"/>
    </ligand>
</feature>
<feature type="binding site" evidence="1">
    <location>
        <position position="85"/>
    </location>
    <ligand>
        <name>D-threo-isocitrate</name>
        <dbReference type="ChEBI" id="CHEBI:15562"/>
    </ligand>
</feature>
<feature type="binding site" evidence="1">
    <location>
        <position position="89"/>
    </location>
    <ligand>
        <name>D-threo-isocitrate</name>
        <dbReference type="ChEBI" id="CHEBI:15562"/>
    </ligand>
</feature>
<feature type="binding site" evidence="1">
    <location>
        <position position="99"/>
    </location>
    <ligand>
        <name>D-threo-isocitrate</name>
        <dbReference type="ChEBI" id="CHEBI:15562"/>
    </ligand>
</feature>
<feature type="binding site" evidence="1">
    <location>
        <position position="121"/>
    </location>
    <ligand>
        <name>D-threo-isocitrate</name>
        <dbReference type="ChEBI" id="CHEBI:15562"/>
    </ligand>
</feature>
<feature type="binding site" evidence="1">
    <location>
        <position position="232"/>
    </location>
    <ligand>
        <name>Mg(2+)</name>
        <dbReference type="ChEBI" id="CHEBI:18420"/>
    </ligand>
</feature>
<feature type="binding site" evidence="1">
    <location>
        <begin position="264"/>
        <end position="270"/>
    </location>
    <ligand>
        <name>NADP(+)</name>
        <dbReference type="ChEBI" id="CHEBI:58349"/>
    </ligand>
</feature>
<feature type="binding site" evidence="1">
    <location>
        <position position="277"/>
    </location>
    <ligand>
        <name>NADP(+)</name>
        <dbReference type="ChEBI" id="CHEBI:58349"/>
    </ligand>
</feature>
<feature type="site" description="Critical for catalysis" evidence="1">
    <location>
        <position position="128"/>
    </location>
</feature>
<feature type="site" description="Critical for catalysis" evidence="1">
    <location>
        <position position="175"/>
    </location>
</feature>
<proteinExistence type="inferred from homology"/>
<dbReference type="EC" id="1.1.1.42" evidence="1"/>
<dbReference type="EMBL" id="AJ235271">
    <property type="protein sequence ID" value="CAA14727.1"/>
    <property type="molecule type" value="Genomic_DNA"/>
</dbReference>
<dbReference type="PIR" id="E71681">
    <property type="entry name" value="E71681"/>
</dbReference>
<dbReference type="RefSeq" id="NP_220650.1">
    <property type="nucleotide sequence ID" value="NC_000963.1"/>
</dbReference>
<dbReference type="RefSeq" id="WP_010886251.1">
    <property type="nucleotide sequence ID" value="NC_000963.1"/>
</dbReference>
<dbReference type="SMR" id="Q9ZDR0"/>
<dbReference type="STRING" id="272947.gene:17555346"/>
<dbReference type="EnsemblBacteria" id="CAA14727">
    <property type="protein sequence ID" value="CAA14727"/>
    <property type="gene ID" value="CAA14727"/>
</dbReference>
<dbReference type="KEGG" id="rpr:RP265"/>
<dbReference type="PATRIC" id="fig|272947.5.peg.272"/>
<dbReference type="eggNOG" id="COG0473">
    <property type="taxonomic scope" value="Bacteria"/>
</dbReference>
<dbReference type="HOGENOM" id="CLU_031953_1_2_5"/>
<dbReference type="OrthoDB" id="9767905at2"/>
<dbReference type="Proteomes" id="UP000002480">
    <property type="component" value="Chromosome"/>
</dbReference>
<dbReference type="GO" id="GO:0004449">
    <property type="term" value="F:isocitrate dehydrogenase (NAD+) activity"/>
    <property type="evidence" value="ECO:0007669"/>
    <property type="project" value="TreeGrafter"/>
</dbReference>
<dbReference type="GO" id="GO:0004450">
    <property type="term" value="F:isocitrate dehydrogenase (NADP+) activity"/>
    <property type="evidence" value="ECO:0007669"/>
    <property type="project" value="UniProtKB-EC"/>
</dbReference>
<dbReference type="GO" id="GO:0000287">
    <property type="term" value="F:magnesium ion binding"/>
    <property type="evidence" value="ECO:0007669"/>
    <property type="project" value="InterPro"/>
</dbReference>
<dbReference type="GO" id="GO:0051287">
    <property type="term" value="F:NAD binding"/>
    <property type="evidence" value="ECO:0007669"/>
    <property type="project" value="InterPro"/>
</dbReference>
<dbReference type="GO" id="GO:0006097">
    <property type="term" value="P:glyoxylate cycle"/>
    <property type="evidence" value="ECO:0007669"/>
    <property type="project" value="UniProtKB-KW"/>
</dbReference>
<dbReference type="GO" id="GO:0006102">
    <property type="term" value="P:isocitrate metabolic process"/>
    <property type="evidence" value="ECO:0007669"/>
    <property type="project" value="TreeGrafter"/>
</dbReference>
<dbReference type="GO" id="GO:0006099">
    <property type="term" value="P:tricarboxylic acid cycle"/>
    <property type="evidence" value="ECO:0007669"/>
    <property type="project" value="UniProtKB-KW"/>
</dbReference>
<dbReference type="FunFam" id="3.40.718.10:FF:000020">
    <property type="entry name" value="Isocitrate dehydrogenase"/>
    <property type="match status" value="1"/>
</dbReference>
<dbReference type="Gene3D" id="3.30.70.1570">
    <property type="match status" value="1"/>
</dbReference>
<dbReference type="Gene3D" id="3.40.718.10">
    <property type="entry name" value="Isopropylmalate Dehydrogenase"/>
    <property type="match status" value="1"/>
</dbReference>
<dbReference type="InterPro" id="IPR019818">
    <property type="entry name" value="IsoCit/isopropylmalate_DH_CS"/>
</dbReference>
<dbReference type="InterPro" id="IPR014273">
    <property type="entry name" value="Isocitrate_DH_bac-typ"/>
</dbReference>
<dbReference type="InterPro" id="IPR040978">
    <property type="entry name" value="Isocitrate_DH_TT1725_C"/>
</dbReference>
<dbReference type="InterPro" id="IPR046997">
    <property type="entry name" value="Isocitrate_DH_TT1725_C_sf"/>
</dbReference>
<dbReference type="InterPro" id="IPR024084">
    <property type="entry name" value="IsoPropMal-DH-like_dom"/>
</dbReference>
<dbReference type="NCBIfam" id="TIGR02924">
    <property type="entry name" value="ICDH_alpha"/>
    <property type="match status" value="1"/>
</dbReference>
<dbReference type="NCBIfam" id="NF006673">
    <property type="entry name" value="PRK09222.1"/>
    <property type="match status" value="1"/>
</dbReference>
<dbReference type="PANTHER" id="PTHR11835">
    <property type="entry name" value="DECARBOXYLATING DEHYDROGENASES-ISOCITRATE, ISOPROPYLMALATE, TARTRATE"/>
    <property type="match status" value="1"/>
</dbReference>
<dbReference type="PANTHER" id="PTHR11835:SF43">
    <property type="entry name" value="ISOPROPYLMALATE DEHYDROGENASE-LIKE DOMAIN-CONTAINING PROTEIN"/>
    <property type="match status" value="1"/>
</dbReference>
<dbReference type="Pfam" id="PF00180">
    <property type="entry name" value="Iso_dh"/>
    <property type="match status" value="1"/>
</dbReference>
<dbReference type="Pfam" id="PF18324">
    <property type="entry name" value="Isocitrate_DH_C_bact"/>
    <property type="match status" value="1"/>
</dbReference>
<dbReference type="SMART" id="SM01329">
    <property type="entry name" value="Iso_dh"/>
    <property type="match status" value="1"/>
</dbReference>
<dbReference type="SUPFAM" id="SSF53659">
    <property type="entry name" value="Isocitrate/Isopropylmalate dehydrogenase-like"/>
    <property type="match status" value="1"/>
</dbReference>
<dbReference type="PROSITE" id="PS00470">
    <property type="entry name" value="IDH_IMDH"/>
    <property type="match status" value="1"/>
</dbReference>
<reference key="1">
    <citation type="journal article" date="1998" name="Nature">
        <title>The genome sequence of Rickettsia prowazekii and the origin of mitochondria.</title>
        <authorList>
            <person name="Andersson S.G.E."/>
            <person name="Zomorodipour A."/>
            <person name="Andersson J.O."/>
            <person name="Sicheritz-Ponten T."/>
            <person name="Alsmark U.C.M."/>
            <person name="Podowski R.M."/>
            <person name="Naeslund A.K."/>
            <person name="Eriksson A.-S."/>
            <person name="Winkler H.H."/>
            <person name="Kurland C.G."/>
        </authorList>
    </citation>
    <scope>NUCLEOTIDE SEQUENCE [LARGE SCALE GENOMIC DNA]</scope>
    <source>
        <strain>Madrid E</strain>
    </source>
</reference>
<evidence type="ECO:0000250" key="1">
    <source>
        <dbReference type="UniProtKB" id="P08200"/>
    </source>
</evidence>
<evidence type="ECO:0000305" key="2"/>
<gene>
    <name type="primary">icd</name>
    <name type="ordered locus">RP265</name>
</gene>
<comment type="function">
    <text evidence="1">Catalyzes the oxidative decarboxylation of isocitrate to 2-oxoglutarate and carbon dioxide with the concomitant reduction of NADP(+).</text>
</comment>
<comment type="catalytic activity">
    <reaction evidence="1">
        <text>D-threo-isocitrate + NADP(+) = 2-oxoglutarate + CO2 + NADPH</text>
        <dbReference type="Rhea" id="RHEA:19629"/>
        <dbReference type="ChEBI" id="CHEBI:15562"/>
        <dbReference type="ChEBI" id="CHEBI:16526"/>
        <dbReference type="ChEBI" id="CHEBI:16810"/>
        <dbReference type="ChEBI" id="CHEBI:57783"/>
        <dbReference type="ChEBI" id="CHEBI:58349"/>
        <dbReference type="EC" id="1.1.1.42"/>
    </reaction>
</comment>
<comment type="cofactor">
    <cofactor evidence="1">
        <name>Mg(2+)</name>
        <dbReference type="ChEBI" id="CHEBI:18420"/>
    </cofactor>
    <cofactor evidence="1">
        <name>Mn(2+)</name>
        <dbReference type="ChEBI" id="CHEBI:29035"/>
    </cofactor>
    <text evidence="1">Binds 1 Mg(2+) or Mn(2+) ion per subunit.</text>
</comment>
<comment type="subunit">
    <text evidence="1">Homodimer.</text>
</comment>
<comment type="similarity">
    <text evidence="2">Belongs to the isocitrate and isopropylmalate dehydrogenases family.</text>
</comment>
<sequence length="483" mass="54318">MAAFTPITIAYGDGIGPEIMEAVLYILRKAEARISLETIEVGEKLYKKHYTSGISEESWDVIQRTGIILKAPITTPQSGGYKSLNVTIRKTLQLFANIRPVVSFYPFTRTLHPNLNLTIIRENEEDLYSGVEYRQTHNMYESMKLISHTGCKKIIRYAFEYAIKNNRKKVTCLTKDNIMKFSDGIFHRVFNEIAKEYPQINNEHYIIDIGTAKLATKPEIFDIIVTSNLYGDIISDVAAEISGSVGLAGSANIGQHYAMFEAVHGSAPDIAGKGIANPSGLLNAAIMMLVHIGQGDIASLIENAWKKTIEDGVHTFDIYNEHSSSKKVCTKEFAVEVIKRLGQLPITLPKAAYPLIVKKQESNIDYKIDTREVKKLVGTDIFINMHVFSAHDIADKINKLDIGNFELKTISSKGLKLWPHDSRFEIISDHWCCRFMNKDGTEIKHLDITMLLQSLSKANIDFIKVENLFEFDGVAWYSLAQGE</sequence>
<protein>
    <recommendedName>
        <fullName>Isocitrate dehydrogenase [NADP]</fullName>
        <shortName>IDH</shortName>
        <ecNumber evidence="1">1.1.1.42</ecNumber>
    </recommendedName>
    <alternativeName>
        <fullName>IDP</fullName>
    </alternativeName>
    <alternativeName>
        <fullName>NADP(+)-specific ICDH</fullName>
    </alternativeName>
    <alternativeName>
        <fullName>Oxalosuccinate decarboxylase</fullName>
    </alternativeName>
</protein>
<name>IDH_RICPR</name>
<organism>
    <name type="scientific">Rickettsia prowazekii (strain Madrid E)</name>
    <dbReference type="NCBI Taxonomy" id="272947"/>
    <lineage>
        <taxon>Bacteria</taxon>
        <taxon>Pseudomonadati</taxon>
        <taxon>Pseudomonadota</taxon>
        <taxon>Alphaproteobacteria</taxon>
        <taxon>Rickettsiales</taxon>
        <taxon>Rickettsiaceae</taxon>
        <taxon>Rickettsieae</taxon>
        <taxon>Rickettsia</taxon>
        <taxon>typhus group</taxon>
    </lineage>
</organism>
<keyword id="KW-0329">Glyoxylate bypass</keyword>
<keyword id="KW-0460">Magnesium</keyword>
<keyword id="KW-0464">Manganese</keyword>
<keyword id="KW-0479">Metal-binding</keyword>
<keyword id="KW-0521">NADP</keyword>
<keyword id="KW-0560">Oxidoreductase</keyword>
<keyword id="KW-1185">Reference proteome</keyword>
<keyword id="KW-0816">Tricarboxylic acid cycle</keyword>
<accession>Q9ZDR0</accession>